<comment type="function">
    <text evidence="2 3 4 6 7">Catalyzes the attachment of tyrosine to tRNA(Tyr) in a two-step reaction: tyrosine is first activated by ATP to form Tyr-AMP and then transferred to the acceptor end of tRNA(Tyr).</text>
</comment>
<comment type="catalytic activity">
    <reaction evidence="2 3 4 5 6">
        <text>tRNA(Tyr) + L-tyrosine + ATP = L-tyrosyl-tRNA(Tyr) + AMP + diphosphate + H(+)</text>
        <dbReference type="Rhea" id="RHEA:10220"/>
        <dbReference type="Rhea" id="RHEA-COMP:9706"/>
        <dbReference type="Rhea" id="RHEA-COMP:9707"/>
        <dbReference type="ChEBI" id="CHEBI:15378"/>
        <dbReference type="ChEBI" id="CHEBI:30616"/>
        <dbReference type="ChEBI" id="CHEBI:33019"/>
        <dbReference type="ChEBI" id="CHEBI:58315"/>
        <dbReference type="ChEBI" id="CHEBI:78442"/>
        <dbReference type="ChEBI" id="CHEBI:78536"/>
        <dbReference type="ChEBI" id="CHEBI:456215"/>
        <dbReference type="EC" id="6.1.1.1"/>
    </reaction>
</comment>
<comment type="biophysicochemical properties">
    <kinetics>
        <KM evidence="7">1.35 mM for ATP</KM>
        <KM evidence="7">1.8 uM for tyrosine</KM>
    </kinetics>
</comment>
<comment type="subunit">
    <text evidence="14">Homodimer.</text>
</comment>
<comment type="subcellular location">
    <subcellularLocation>
        <location>Cytoplasm</location>
    </subcellularLocation>
</comment>
<comment type="similarity">
    <text evidence="11">Belongs to the class-I aminoacyl-tRNA synthetase family. TyrS type 1 subfamily.</text>
</comment>
<evidence type="ECO:0000250" key="1"/>
<evidence type="ECO:0000269" key="2">
    <source>
    </source>
</evidence>
<evidence type="ECO:0000269" key="3">
    <source>
    </source>
</evidence>
<evidence type="ECO:0000269" key="4">
    <source>
    </source>
</evidence>
<evidence type="ECO:0000269" key="5">
    <source>
    </source>
</evidence>
<evidence type="ECO:0000269" key="6">
    <source>
    </source>
</evidence>
<evidence type="ECO:0000269" key="7">
    <source>
    </source>
</evidence>
<evidence type="ECO:0000269" key="8">
    <source>
    </source>
</evidence>
<evidence type="ECO:0000303" key="9">
    <source>
    </source>
</evidence>
<evidence type="ECO:0000303" key="10">
    <source>
    </source>
</evidence>
<evidence type="ECO:0000305" key="11"/>
<evidence type="ECO:0000305" key="12">
    <source>
    </source>
</evidence>
<evidence type="ECO:0000305" key="13">
    <source>
    </source>
</evidence>
<evidence type="ECO:0000305" key="14">
    <source>
    </source>
</evidence>
<evidence type="ECO:0007744" key="15">
    <source>
        <dbReference type="PDB" id="1TYD"/>
    </source>
</evidence>
<evidence type="ECO:0007744" key="16">
    <source>
        <dbReference type="PDB" id="2TS1"/>
    </source>
</evidence>
<evidence type="ECO:0007744" key="17">
    <source>
        <dbReference type="PDB" id="3TS1"/>
    </source>
</evidence>
<evidence type="ECO:0007829" key="18">
    <source>
        <dbReference type="PDB" id="1JH3"/>
    </source>
</evidence>
<evidence type="ECO:0007829" key="19">
    <source>
        <dbReference type="PDB" id="1TYB"/>
    </source>
</evidence>
<evidence type="ECO:0007829" key="20">
    <source>
        <dbReference type="PDB" id="1TYC"/>
    </source>
</evidence>
<evidence type="ECO:0007829" key="21">
    <source>
        <dbReference type="PDB" id="2TS1"/>
    </source>
</evidence>
<evidence type="ECO:0007829" key="22">
    <source>
        <dbReference type="PDB" id="4TS1"/>
    </source>
</evidence>
<accession>P00952</accession>
<keyword id="KW-0002">3D-structure</keyword>
<keyword id="KW-0030">Aminoacyl-tRNA synthetase</keyword>
<keyword id="KW-0067">ATP-binding</keyword>
<keyword id="KW-0963">Cytoplasm</keyword>
<keyword id="KW-0903">Direct protein sequencing</keyword>
<keyword id="KW-0436">Ligase</keyword>
<keyword id="KW-0547">Nucleotide-binding</keyword>
<keyword id="KW-0648">Protein biosynthesis</keyword>
<keyword id="KW-0694">RNA-binding</keyword>
<keyword id="KW-0820">tRNA-binding</keyword>
<gene>
    <name type="primary">tyrS</name>
</gene>
<name>SYY_GEOSE</name>
<sequence>MDLLAELQWRGLVNQTTDEDGLRKLLNEERVTLYCGFDPTADSLHIGHLATILTMRRFQQAGHRPIALVGGATGLIGDPSGKKSERTLNAKETVEAWSARIKEQLGRFLDFEADGNPAKIKNNYDWIGPLDVITFLRDVGKHFSVNYMMAKESVQSRIETGISFTEFSYMMLQAYDFLRLYETEGCRLQIGGSDQWGNITAGLELIRKTKGEARAFGLTIPLVTKADGTKFGKTESGTIWLDKEKTSPYEFYQFWINTDDRDVIRYLKYFTFLSKEEIEALEQELREAPEKRAAQKTLAEEVTKLVHGEEALRQAIRISEALFSGDIANLTAAEIEQGFKDVPSFVHEGGDVPLVELLVSAGISPSKRQAREDIQNGAIYVNGERLQDVGAILTAEHRLEGRFTVIRRGKKKYYLIRYA</sequence>
<organism>
    <name type="scientific">Geobacillus stearothermophilus</name>
    <name type="common">Bacillus stearothermophilus</name>
    <dbReference type="NCBI Taxonomy" id="1422"/>
    <lineage>
        <taxon>Bacteria</taxon>
        <taxon>Bacillati</taxon>
        <taxon>Bacillota</taxon>
        <taxon>Bacilli</taxon>
        <taxon>Bacillales</taxon>
        <taxon>Anoxybacillaceae</taxon>
        <taxon>Geobacillus</taxon>
    </lineage>
</organism>
<proteinExistence type="evidence at protein level"/>
<reference key="1">
    <citation type="journal article" date="1983" name="Eur. J. Biochem.">
        <title>The amino acid sequence of the tyrosyl-tRNA synthetase from Bacillus stearothermophilus.</title>
        <authorList>
            <person name="Winter G."/>
            <person name="Koch G.L.E."/>
            <person name="Hartley B.S."/>
            <person name="Barker D.G."/>
        </authorList>
    </citation>
    <scope>NUCLEOTIDE SEQUENCE [GENOMIC DNA]</scope>
    <scope>PROTEIN SEQUENCE OF 2-124; 136-157 AND 172-419</scope>
</reference>
<reference key="2">
    <citation type="journal article" date="1986" name="Eur. J. Biochem.">
        <title>A transcription terminator in the 5' non-coding region of the tyrosyl tRNA synthetase gene from Bacillus stearothermophilus.</title>
        <authorList>
            <person name="Waye M.M.Y."/>
            <person name="Winter G."/>
        </authorList>
    </citation>
    <scope>NUCLEOTIDE SEQUENCE [GENOMIC DNA] OF 1-11</scope>
</reference>
<reference key="3">
    <citation type="journal article" date="1983" name="EMBO J.">
        <title>Deletion mutagenesis using an 'M13 splint': the N-terminal structural domain of tyrosyl-tRNA synthetase (B. stearothermophilus) catalyses the formation of tyrosyl adenylate.</title>
        <authorList>
            <person name="Waye M.M.Y."/>
            <person name="Winter G."/>
            <person name="Wilkinson A.J."/>
            <person name="Fersht A.R."/>
        </authorList>
    </citation>
    <scope>FUNCTION</scope>
    <scope>BIOPHYSICOCHEMICAL PROPERTIES</scope>
</reference>
<reference key="4">
    <citation type="journal article" date="1986" name="Proc. Natl. Acad. Sci. U.S.A.">
        <title>Construction of heterodimer tyrosyl-tRNA synthetase shows tRNATyr interacts with both subunits.</title>
        <authorList>
            <person name="Carter P."/>
            <person name="Bedouelle H."/>
            <person name="Winter G."/>
        </authorList>
    </citation>
    <scope>INTERACTION WITH TRNA(TYR)</scope>
    <scope>SUBUNIT</scope>
</reference>
<reference key="5">
    <citation type="journal article" date="1992" name="J. Mol. Biol.">
        <title>Role of residue Glu152 in the discrimination between transfer RNAs by tyrosyl-tRNA synthetase from Bacillus stearothermophilus.</title>
        <authorList>
            <person name="Vidal-Cros A."/>
            <person name="Bedouelle H."/>
        </authorList>
    </citation>
    <scope>FUNCTION</scope>
    <scope>CATALYTIC ACTIVITY</scope>
    <scope>MUTAGENESIS OF HIS-45; GLU-152; THR-224; LYS-410 AND LYS-411</scope>
</reference>
<reference key="6">
    <citation type="journal article" date="2000" name="Biochemistry">
        <title>The 'KMSKS' motif in tyrosyl-tRNA synthetase participates in the initial binding of tRNA(Tyr).</title>
        <authorList>
            <person name="Xin Y."/>
            <person name="Li W."/>
            <person name="First E.A."/>
        </authorList>
    </citation>
    <scope>FUNCTION</scope>
    <scope>CATALYTIC ACTIVITY</scope>
    <scope>MOTIF</scope>
    <scope>MUTAGENESIS OF LYS-230; PHE-231; GLY-232; LYS-233 AND THR-234</scope>
</reference>
<reference key="7">
    <citation type="journal article" date="2000" name="J. Mol. Biol.">
        <title>Correlating amino acid conservation with function in tyrosyl-tRNA synthetase.</title>
        <authorList>
            <person name="Xin Y."/>
            <person name="Li W."/>
            <person name="Dwyer D.S."/>
            <person name="First E.A."/>
        </authorList>
    </citation>
    <scope>FUNCTION</scope>
    <scope>CATALYTIC ACTIVITY</scope>
    <scope>MUTAGENESIS OF THR-40; HIS-45; HIS-48; LYS-82 AND ARG-86</scope>
</reference>
<reference key="8">
    <citation type="journal article" date="2000" name="J. Mol. Biol.">
        <title>Stabilization of the transition state for the transfer of tyrosine to tRNA(Tyr) by tyrosyl-tRNA synthetase.</title>
        <authorList>
            <person name="Xin Y."/>
            <person name="Li W."/>
            <person name="First E.A."/>
        </authorList>
    </citation>
    <scope>FUNCTION</scope>
    <scope>CATALYTIC ACTIVITY</scope>
    <scope>MOTIF</scope>
    <scope>MUTAGENESIS OF ASP-78; TYR-169; GLN-173; ASP-194 AND GLN-195</scope>
</reference>
<reference key="9">
    <citation type="journal article" date="2001" name="Biochemistry">
        <title>An essential residue in the flexible peptide linking the two idiosynchratic domains of bacterial tyrosyl-tRNA synthetases.</title>
        <authorList>
            <person name="Gaillard C."/>
            <person name="Bedouelle H."/>
        </authorList>
    </citation>
    <scope>FUNCTION</scope>
    <scope>CATALYTIC ACTIVITY</scope>
    <scope>MUTAGENESIS OF LEU-322; PHE-323; SER-324; GLY-325 AND PHE-339</scope>
</reference>
<reference key="10">
    <citation type="journal article" date="1982" name="J. Mol. Biol.">
        <title>Tyrosyl-tRNA synthetase forms a mononucleotide-binding fold.</title>
        <authorList>
            <person name="Bhat T.N."/>
            <person name="Blow D.M."/>
            <person name="Brick P."/>
            <person name="Nyborg J."/>
        </authorList>
    </citation>
    <scope>X-RAY CRYSTALLOGRAPHY (3.0 ANGSTROMS)</scope>
</reference>
<reference evidence="15 16 17" key="11">
    <citation type="journal article" date="1989" name="J. Mol. Biol.">
        <title>Structure of tyrosyl-tRNA synthetase refined at 2.3-A resolution. Interaction of the enzyme with the tyrosyl adenylate intermediate.</title>
        <authorList>
            <person name="Brick P."/>
            <person name="Bhat T.N."/>
            <person name="Blow D.M."/>
        </authorList>
    </citation>
    <scope>X-RAY CRYSTALLOGRAPHY (2.3 ANGSTROMS) IN COMPLEX WITH TYROSINE</scope>
</reference>
<feature type="initiator methionine" description="Removed" evidence="8">
    <location>
        <position position="1"/>
    </location>
</feature>
<feature type="chain" id="PRO_0000055642" description="Tyrosine--tRNA ligase">
    <location>
        <begin position="2"/>
        <end position="419"/>
    </location>
</feature>
<feature type="domain" description="S4 RNA-binding">
    <location>
        <begin position="352"/>
        <end position="419"/>
    </location>
</feature>
<feature type="short sequence motif" description="'HIGH' region" evidence="13">
    <location>
        <begin position="39"/>
        <end position="48"/>
    </location>
</feature>
<feature type="short sequence motif" description="'KMSKS' region" evidence="12">
    <location>
        <begin position="230"/>
        <end position="234"/>
    </location>
</feature>
<feature type="binding site" evidence="15">
    <location>
        <position position="34"/>
    </location>
    <ligand>
        <name>L-tyrosine</name>
        <dbReference type="ChEBI" id="CHEBI:58315"/>
    </ligand>
</feature>
<feature type="binding site" evidence="15">
    <location>
        <position position="169"/>
    </location>
    <ligand>
        <name>L-tyrosine</name>
        <dbReference type="ChEBI" id="CHEBI:58315"/>
    </ligand>
</feature>
<feature type="binding site" evidence="1 15">
    <location>
        <position position="173"/>
    </location>
    <ligand>
        <name>L-tyrosine</name>
        <dbReference type="ChEBI" id="CHEBI:58315"/>
    </ligand>
</feature>
<feature type="binding site" evidence="1 15">
    <location>
        <position position="176"/>
    </location>
    <ligand>
        <name>L-tyrosine</name>
        <dbReference type="ChEBI" id="CHEBI:58315"/>
    </ligand>
</feature>
<feature type="binding site" evidence="1">
    <location>
        <position position="233"/>
    </location>
    <ligand>
        <name>ATP</name>
        <dbReference type="ChEBI" id="CHEBI:30616"/>
    </ligand>
</feature>
<feature type="mutagenesis site" description="Destabilizes the transition states for both steps of the reaction." evidence="3">
    <original>T</original>
    <variation>A</variation>
    <location>
        <position position="40"/>
    </location>
</feature>
<feature type="mutagenesis site" description="Does not affect the second step of the reaction." evidence="3 6">
    <original>H</original>
    <variation>A</variation>
    <location>
        <position position="45"/>
    </location>
</feature>
<feature type="mutagenesis site" description="Decreases the rate of formation of Tyr-AMP and, as a consequence, abolishes the aminoacylation activity. Strongly increases the toxicity; when associated with A-152." evidence="3 6">
    <original>H</original>
    <variation>N</variation>
    <location>
        <position position="45"/>
    </location>
</feature>
<feature type="mutagenesis site" description="Does not affect the second step of the reaction." evidence="3">
    <original>H</original>
    <variation>A</variation>
    <location>
        <position position="48"/>
    </location>
</feature>
<feature type="mutagenesis site" description="Does not affect the initial binding of tRNA(Tyr) and the stability of the transition state for the second step of the reaction." evidence="4">
    <original>D</original>
    <variation>A</variation>
    <location>
        <position position="78"/>
    </location>
</feature>
<feature type="mutagenesis site" description="Destabilizes the transition states for both steps of the reaction." evidence="3">
    <original>K</original>
    <variation>A</variation>
    <location>
        <position position="82"/>
    </location>
</feature>
<feature type="mutagenesis site" description="Destabilizes the transition states for both steps of the reaction." evidence="3">
    <original>R</original>
    <variation>A</variation>
    <location>
        <position position="86"/>
    </location>
</feature>
<feature type="mutagenesis site" description="Mischarges tRNA(Phe) with tyrosine in vitro. Toxic for the cell, probably because it alters the discrimination of TyrRS against non-cognate tRNAs. The toxicity is abolished; when associated with N-410 or N-411. Strongly increases toxicity; when associated with N-45. Enhances the toxicity; when associated with A-224." evidence="6">
    <original>E</original>
    <variation>A</variation>
    <location>
        <position position="152"/>
    </location>
</feature>
<feature type="mutagenesis site" description="Does not charge tRNA(Phe) in vitro with tyrosine." evidence="6">
    <original>E</original>
    <variation>D</variation>
    <location>
        <position position="152"/>
    </location>
</feature>
<feature type="mutagenesis site" description="Mischarges tRNA(Phe) with tyrosine in vitro but this mutation is not toxic in vivo." evidence="6">
    <original>E</original>
    <variation>Q</variation>
    <location>
        <position position="152"/>
    </location>
</feature>
<feature type="mutagenesis site" description="Does not affect the initial binding of tRNA(Tyr) and the stability of the transition state for the second step of the reaction." evidence="4">
    <original>Y</original>
    <variation>A</variation>
    <location>
        <position position="169"/>
    </location>
</feature>
<feature type="mutagenesis site" description="Destabilizes the transition state for the second step of the reaction." evidence="4">
    <original>Q</original>
    <variation>A</variation>
    <location>
        <position position="173"/>
    </location>
</feature>
<feature type="mutagenesis site" description="Destabilizes the transition state for the first step of the reaction, but does not affect the transition state for the second step." evidence="4">
    <original>D</original>
    <variation>A</variation>
    <location>
        <position position="194"/>
    </location>
</feature>
<feature type="mutagenesis site" description="Destabilizes the transition state for the first step of the reaction, but does not affect the transition state for the second step." evidence="4">
    <original>Q</original>
    <variation>A</variation>
    <location>
        <position position="195"/>
    </location>
</feature>
<feature type="mutagenesis site" description="Is not toxic in itself. Enhances the toxicity; when associated with A-152." evidence="6">
    <original>T</original>
    <variation>A</variation>
    <location>
        <position position="224"/>
    </location>
</feature>
<feature type="mutagenesis site" description="Decreases the binding affinity between tRNA(Tyr) and TyrRS-Tyr-AMP complex." evidence="2">
    <original>K</original>
    <variation>A</variation>
    <location>
        <position position="230"/>
    </location>
</feature>
<feature type="mutagenesis site" description="No effect on the binding affinity between tRNA(Tyr) and TyrRS-Tyr-AMP complex." evidence="2">
    <original>F</original>
    <variation>L</variation>
    <location>
        <position position="231"/>
    </location>
</feature>
<feature type="mutagenesis site" description="No effect on the binding affinity between tRNA(Tyr) and TyrRS-Tyr-AMP complex." evidence="2">
    <original>G</original>
    <variation>A</variation>
    <location>
        <position position="232"/>
    </location>
</feature>
<feature type="mutagenesis site" description="Decreases the binding affinity between tRNA(Tyr) and TyrRS-Tyr-AMP complex." evidence="2">
    <original>K</original>
    <variation>A</variation>
    <location>
        <position position="233"/>
    </location>
</feature>
<feature type="mutagenesis site" description="No effect on the binding affinity between tRNA(Tyr) and TyrRS-Tyr-AMP complex." evidence="2">
    <original>T</original>
    <variation>A</variation>
    <location>
        <position position="234"/>
    </location>
</feature>
<feature type="mutagenesis site" description="50-fold decrease in charging of tRNA(Tyr) with tyrosine." evidence="5">
    <original>L</original>
    <variation>P</variation>
    <location>
        <position position="322"/>
    </location>
</feature>
<feature type="mutagenesis site" description="90-fold decrease in charging of tRNA(Tyr) with tyrosine, without effect on the first step of the reaction." evidence="5">
    <original>F</original>
    <variation>A</variation>
    <location>
        <position position="323"/>
    </location>
</feature>
<feature type="mutagenesis site" description="67-fold decrease in charging of tRNA(Tyr) with tyrosine, without effect on the first step of the reaction." evidence="5">
    <original>F</original>
    <variation>L</variation>
    <location>
        <position position="323"/>
    </location>
</feature>
<feature type="mutagenesis site" description="Weak decrease in charging of tRNA(Tyr) with tyrosine, without effect on the first step of the reaction." evidence="5">
    <original>F</original>
    <variation>W</variation>
    <location>
        <position position="323"/>
    </location>
</feature>
<feature type="mutagenesis site" description="3-fold decrease in charging of tRNA(Tyr) with tyrosine, without effect on the first step of the reaction." evidence="5">
    <original>F</original>
    <variation>Y</variation>
    <location>
        <position position="323"/>
    </location>
</feature>
<feature type="mutagenesis site" description="2-fold increase in charging of tRNA(Tyr) with tyrosine." evidence="5">
    <original>S</original>
    <variation>A</variation>
    <location>
        <position position="324"/>
    </location>
</feature>
<feature type="mutagenesis site" description="5-fold increase in charging of tRNA(Tyr) with tyrosine." evidence="5">
    <original>G</original>
    <variation>A</variation>
    <location>
        <position position="325"/>
    </location>
</feature>
<feature type="mutagenesis site" description="Has no effect on charging of tRNA(Tyr) with tyrosine." evidence="5">
    <original>F</original>
    <variation>L</variation>
    <location>
        <position position="339"/>
    </location>
</feature>
<feature type="mutagenesis site" description="Decreases the binding of tRNA(Tyr), without affecting the formation of Tyr-AMP. Abolishes the toxicity; when associated with A-152." evidence="6">
    <original>K</original>
    <variation>N</variation>
    <location>
        <position position="410"/>
    </location>
</feature>
<feature type="mutagenesis site" description="Decreases the binding of tRNA(Tyr), without affecting the formation of Tyr-AMP. Abolishes the toxicity; when associated with A-152." evidence="6">
    <original>K</original>
    <variation>N</variation>
    <location>
        <position position="411"/>
    </location>
</feature>
<feature type="helix" evidence="21">
    <location>
        <begin position="2"/>
        <end position="10"/>
    </location>
</feature>
<feature type="strand" evidence="21">
    <location>
        <begin position="14"/>
        <end position="17"/>
    </location>
</feature>
<feature type="helix" evidence="21">
    <location>
        <begin position="19"/>
        <end position="28"/>
    </location>
</feature>
<feature type="strand" evidence="21">
    <location>
        <begin position="32"/>
        <end position="37"/>
    </location>
</feature>
<feature type="strand" evidence="21">
    <location>
        <begin position="40"/>
        <end position="43"/>
    </location>
</feature>
<feature type="helix" evidence="21">
    <location>
        <begin position="46"/>
        <end position="48"/>
    </location>
</feature>
<feature type="helix" evidence="21">
    <location>
        <begin position="49"/>
        <end position="60"/>
    </location>
</feature>
<feature type="strand" evidence="21">
    <location>
        <begin position="64"/>
        <end position="69"/>
    </location>
</feature>
<feature type="helix" evidence="21">
    <location>
        <begin position="73"/>
        <end position="75"/>
    </location>
</feature>
<feature type="helix" evidence="21">
    <location>
        <begin position="91"/>
        <end position="105"/>
    </location>
</feature>
<feature type="helix" evidence="20">
    <location>
        <begin position="106"/>
        <end position="108"/>
    </location>
</feature>
<feature type="strand" evidence="21">
    <location>
        <begin position="114"/>
        <end position="116"/>
    </location>
</feature>
<feature type="strand" evidence="21">
    <location>
        <begin position="119"/>
        <end position="122"/>
    </location>
</feature>
<feature type="helix" evidence="21">
    <location>
        <begin position="124"/>
        <end position="127"/>
    </location>
</feature>
<feature type="helix" evidence="21">
    <location>
        <begin position="132"/>
        <end position="138"/>
    </location>
</feature>
<feature type="helix" evidence="21">
    <location>
        <begin position="140"/>
        <end position="142"/>
    </location>
</feature>
<feature type="helix" evidence="21">
    <location>
        <begin position="145"/>
        <end position="149"/>
    </location>
</feature>
<feature type="helix" evidence="21">
    <location>
        <begin position="152"/>
        <end position="155"/>
    </location>
</feature>
<feature type="turn" evidence="21">
    <location>
        <begin position="156"/>
        <end position="160"/>
    </location>
</feature>
<feature type="helix" evidence="21">
    <location>
        <begin position="164"/>
        <end position="184"/>
    </location>
</feature>
<feature type="strand" evidence="21">
    <location>
        <begin position="186"/>
        <end position="192"/>
    </location>
</feature>
<feature type="helix" evidence="21">
    <location>
        <begin position="193"/>
        <end position="195"/>
    </location>
</feature>
<feature type="helix" evidence="21">
    <location>
        <begin position="196"/>
        <end position="210"/>
    </location>
</feature>
<feature type="strand" evidence="21">
    <location>
        <begin position="216"/>
        <end position="220"/>
    </location>
</feature>
<feature type="strand" evidence="22">
    <location>
        <begin position="235"/>
        <end position="238"/>
    </location>
</feature>
<feature type="strand" evidence="21">
    <location>
        <begin position="240"/>
        <end position="242"/>
    </location>
</feature>
<feature type="turn" evidence="21">
    <location>
        <begin position="243"/>
        <end position="245"/>
    </location>
</feature>
<feature type="helix" evidence="21">
    <location>
        <begin position="248"/>
        <end position="256"/>
    </location>
</feature>
<feature type="helix" evidence="21">
    <location>
        <begin position="260"/>
        <end position="270"/>
    </location>
</feature>
<feature type="helix" evidence="21">
    <location>
        <begin position="275"/>
        <end position="287"/>
    </location>
</feature>
<feature type="turn" evidence="19">
    <location>
        <begin position="289"/>
        <end position="291"/>
    </location>
</feature>
<feature type="helix" evidence="21">
    <location>
        <begin position="293"/>
        <end position="307"/>
    </location>
</feature>
<feature type="helix" evidence="21">
    <location>
        <begin position="309"/>
        <end position="318"/>
    </location>
</feature>
<feature type="strand" evidence="18">
    <location>
        <begin position="325"/>
        <end position="327"/>
    </location>
</feature>
<feature type="helix" evidence="18">
    <location>
        <begin position="332"/>
        <end position="339"/>
    </location>
</feature>
<feature type="strand" evidence="18">
    <location>
        <begin position="344"/>
        <end position="347"/>
    </location>
</feature>
<feature type="helix" evidence="18">
    <location>
        <begin position="354"/>
        <end position="361"/>
    </location>
</feature>
<feature type="helix" evidence="18">
    <location>
        <begin position="367"/>
        <end position="375"/>
    </location>
</feature>
<feature type="strand" evidence="18">
    <location>
        <begin position="379"/>
        <end position="381"/>
    </location>
</feature>
<feature type="turn" evidence="18">
    <location>
        <begin position="389"/>
        <end position="391"/>
    </location>
</feature>
<feature type="turn" evidence="18">
    <location>
        <begin position="396"/>
        <end position="398"/>
    </location>
</feature>
<feature type="strand" evidence="18">
    <location>
        <begin position="399"/>
        <end position="408"/>
    </location>
</feature>
<feature type="strand" evidence="18">
    <location>
        <begin position="413"/>
        <end position="418"/>
    </location>
</feature>
<dbReference type="EC" id="6.1.1.1" evidence="6"/>
<dbReference type="EMBL" id="J01546">
    <property type="status" value="NOT_ANNOTATED_CDS"/>
    <property type="molecule type" value="Genomic_DNA"/>
</dbReference>
<dbReference type="EMBL" id="X04193">
    <property type="protein sequence ID" value="CAA27784.1"/>
    <property type="molecule type" value="Genomic_DNA"/>
</dbReference>
<dbReference type="PIR" id="A01179">
    <property type="entry name" value="SYBSYF"/>
</dbReference>
<dbReference type="RefSeq" id="WP_033014498.1">
    <property type="nucleotide sequence ID" value="NZ_RCTK01000009.1"/>
</dbReference>
<dbReference type="PDB" id="1JH3">
    <property type="method" value="NMR"/>
    <property type="chains" value="A=321-419"/>
</dbReference>
<dbReference type="PDB" id="1TYA">
    <property type="method" value="X-ray"/>
    <property type="resolution" value="2.80 A"/>
    <property type="chains" value="E=1-319"/>
</dbReference>
<dbReference type="PDB" id="1TYB">
    <property type="method" value="X-ray"/>
    <property type="resolution" value="2.50 A"/>
    <property type="chains" value="E=1-319"/>
</dbReference>
<dbReference type="PDB" id="1TYC">
    <property type="method" value="X-ray"/>
    <property type="resolution" value="2.50 A"/>
    <property type="chains" value="A=1-319"/>
</dbReference>
<dbReference type="PDB" id="1TYD">
    <property type="method" value="X-ray"/>
    <property type="resolution" value="2.50 A"/>
    <property type="chains" value="E=1-319"/>
</dbReference>
<dbReference type="PDB" id="2TS1">
    <property type="method" value="X-ray"/>
    <property type="resolution" value="2.30 A"/>
    <property type="chains" value="A=1-419"/>
</dbReference>
<dbReference type="PDB" id="3TS1">
    <property type="method" value="X-ray"/>
    <property type="resolution" value="2.70 A"/>
    <property type="chains" value="A=1-419"/>
</dbReference>
<dbReference type="PDB" id="4TS1">
    <property type="method" value="X-ray"/>
    <property type="resolution" value="2.50 A"/>
    <property type="chains" value="A/B=1-317"/>
</dbReference>
<dbReference type="PDBsum" id="1JH3"/>
<dbReference type="PDBsum" id="1TYA"/>
<dbReference type="PDBsum" id="1TYB"/>
<dbReference type="PDBsum" id="1TYC"/>
<dbReference type="PDBsum" id="1TYD"/>
<dbReference type="PDBsum" id="2TS1"/>
<dbReference type="PDBsum" id="3TS1"/>
<dbReference type="PDBsum" id="4TS1"/>
<dbReference type="BMRB" id="P00952"/>
<dbReference type="SMR" id="P00952"/>
<dbReference type="GeneID" id="89612017"/>
<dbReference type="OrthoDB" id="9804243at2"/>
<dbReference type="BRENDA" id="6.1.1.1">
    <property type="organism ID" value="623"/>
</dbReference>
<dbReference type="SABIO-RK" id="P00952"/>
<dbReference type="EvolutionaryTrace" id="P00952"/>
<dbReference type="GO" id="GO:0005829">
    <property type="term" value="C:cytosol"/>
    <property type="evidence" value="ECO:0007669"/>
    <property type="project" value="TreeGrafter"/>
</dbReference>
<dbReference type="GO" id="GO:0032991">
    <property type="term" value="C:protein-containing complex"/>
    <property type="evidence" value="ECO:0000314"/>
    <property type="project" value="CAFA"/>
</dbReference>
<dbReference type="GO" id="GO:0005524">
    <property type="term" value="F:ATP binding"/>
    <property type="evidence" value="ECO:0000314"/>
    <property type="project" value="CAFA"/>
</dbReference>
<dbReference type="GO" id="GO:0042803">
    <property type="term" value="F:protein homodimerization activity"/>
    <property type="evidence" value="ECO:0000314"/>
    <property type="project" value="CAFA"/>
</dbReference>
<dbReference type="GO" id="GO:0000049">
    <property type="term" value="F:tRNA binding"/>
    <property type="evidence" value="ECO:0000314"/>
    <property type="project" value="CAFA"/>
</dbReference>
<dbReference type="GO" id="GO:0004831">
    <property type="term" value="F:tyrosine-tRNA ligase activity"/>
    <property type="evidence" value="ECO:0000314"/>
    <property type="project" value="CAFA"/>
</dbReference>
<dbReference type="GO" id="GO:0061635">
    <property type="term" value="P:regulation of protein complex stability"/>
    <property type="evidence" value="ECO:0000315"/>
    <property type="project" value="CAFA"/>
</dbReference>
<dbReference type="GO" id="GO:0006437">
    <property type="term" value="P:tyrosyl-tRNA aminoacylation"/>
    <property type="evidence" value="ECO:0000314"/>
    <property type="project" value="CAFA"/>
</dbReference>
<dbReference type="CDD" id="cd00165">
    <property type="entry name" value="S4"/>
    <property type="match status" value="1"/>
</dbReference>
<dbReference type="CDD" id="cd00395">
    <property type="entry name" value="Tyr_Trp_RS_core"/>
    <property type="match status" value="1"/>
</dbReference>
<dbReference type="FunFam" id="1.10.240.10:FF:000001">
    <property type="entry name" value="Tyrosine--tRNA ligase"/>
    <property type="match status" value="1"/>
</dbReference>
<dbReference type="FunFam" id="3.10.290.10:FF:000012">
    <property type="entry name" value="Tyrosine--tRNA ligase"/>
    <property type="match status" value="1"/>
</dbReference>
<dbReference type="FunFam" id="3.40.50.620:FF:000008">
    <property type="entry name" value="Tyrosine--tRNA ligase"/>
    <property type="match status" value="1"/>
</dbReference>
<dbReference type="Gene3D" id="3.40.50.620">
    <property type="entry name" value="HUPs"/>
    <property type="match status" value="1"/>
</dbReference>
<dbReference type="Gene3D" id="3.10.290.10">
    <property type="entry name" value="RNA-binding S4 domain"/>
    <property type="match status" value="1"/>
</dbReference>
<dbReference type="Gene3D" id="1.10.240.10">
    <property type="entry name" value="Tyrosyl-Transfer RNA Synthetase"/>
    <property type="match status" value="1"/>
</dbReference>
<dbReference type="HAMAP" id="MF_02006">
    <property type="entry name" value="Tyr_tRNA_synth_type1"/>
    <property type="match status" value="1"/>
</dbReference>
<dbReference type="InterPro" id="IPR001412">
    <property type="entry name" value="aa-tRNA-synth_I_CS"/>
</dbReference>
<dbReference type="InterPro" id="IPR002305">
    <property type="entry name" value="aa-tRNA-synth_Ic"/>
</dbReference>
<dbReference type="InterPro" id="IPR014729">
    <property type="entry name" value="Rossmann-like_a/b/a_fold"/>
</dbReference>
<dbReference type="InterPro" id="IPR002942">
    <property type="entry name" value="S4_RNA-bd"/>
</dbReference>
<dbReference type="InterPro" id="IPR036986">
    <property type="entry name" value="S4_RNA-bd_sf"/>
</dbReference>
<dbReference type="InterPro" id="IPR054608">
    <property type="entry name" value="SYY-like_C"/>
</dbReference>
<dbReference type="InterPro" id="IPR002307">
    <property type="entry name" value="Tyr-tRNA-ligase"/>
</dbReference>
<dbReference type="InterPro" id="IPR024088">
    <property type="entry name" value="Tyr-tRNA-ligase_bac-type"/>
</dbReference>
<dbReference type="InterPro" id="IPR024107">
    <property type="entry name" value="Tyr-tRNA-ligase_bac_1"/>
</dbReference>
<dbReference type="NCBIfam" id="TIGR00234">
    <property type="entry name" value="tyrS"/>
    <property type="match status" value="1"/>
</dbReference>
<dbReference type="PANTHER" id="PTHR11766:SF0">
    <property type="entry name" value="TYROSINE--TRNA LIGASE, MITOCHONDRIAL"/>
    <property type="match status" value="1"/>
</dbReference>
<dbReference type="PANTHER" id="PTHR11766">
    <property type="entry name" value="TYROSYL-TRNA SYNTHETASE"/>
    <property type="match status" value="1"/>
</dbReference>
<dbReference type="Pfam" id="PF22421">
    <property type="entry name" value="SYY_C-terminal"/>
    <property type="match status" value="1"/>
</dbReference>
<dbReference type="Pfam" id="PF00579">
    <property type="entry name" value="tRNA-synt_1b"/>
    <property type="match status" value="1"/>
</dbReference>
<dbReference type="PRINTS" id="PR01040">
    <property type="entry name" value="TRNASYNTHTYR"/>
</dbReference>
<dbReference type="SMART" id="SM00363">
    <property type="entry name" value="S4"/>
    <property type="match status" value="1"/>
</dbReference>
<dbReference type="SUPFAM" id="SSF55174">
    <property type="entry name" value="Alpha-L RNA-binding motif"/>
    <property type="match status" value="1"/>
</dbReference>
<dbReference type="SUPFAM" id="SSF52374">
    <property type="entry name" value="Nucleotidylyl transferase"/>
    <property type="match status" value="1"/>
</dbReference>
<dbReference type="PROSITE" id="PS00178">
    <property type="entry name" value="AA_TRNA_LIGASE_I"/>
    <property type="match status" value="1"/>
</dbReference>
<dbReference type="PROSITE" id="PS50889">
    <property type="entry name" value="S4"/>
    <property type="match status" value="1"/>
</dbReference>
<protein>
    <recommendedName>
        <fullName>Tyrosine--tRNA ligase</fullName>
        <ecNumber evidence="6">6.1.1.1</ecNumber>
    </recommendedName>
    <alternativeName>
        <fullName evidence="9">Tyrosyl-tRNA synthetase</fullName>
        <shortName evidence="9">TyrRS</shortName>
        <shortName evidence="10">TyrTS</shortName>
    </alternativeName>
</protein>